<protein>
    <recommendedName>
        <fullName evidence="1">Ribosomal RNA large subunit methyltransferase I</fullName>
        <ecNumber evidence="1">2.1.1.191</ecNumber>
    </recommendedName>
    <alternativeName>
        <fullName evidence="1">23S rRNA m5C1962 methyltransferase</fullName>
    </alternativeName>
    <alternativeName>
        <fullName evidence="1">rRNA (cytosine-C(5)-)-methyltransferase RlmI</fullName>
    </alternativeName>
</protein>
<comment type="function">
    <text evidence="1">Specifically methylates the cytosine at position 1962 (m5C1962) of 23S rRNA.</text>
</comment>
<comment type="catalytic activity">
    <reaction evidence="1">
        <text>cytidine(1962) in 23S rRNA + S-adenosyl-L-methionine = 5-methylcytidine(1962) in 23S rRNA + S-adenosyl-L-homocysteine + H(+)</text>
        <dbReference type="Rhea" id="RHEA:42912"/>
        <dbReference type="Rhea" id="RHEA-COMP:10382"/>
        <dbReference type="Rhea" id="RHEA-COMP:10386"/>
        <dbReference type="ChEBI" id="CHEBI:15378"/>
        <dbReference type="ChEBI" id="CHEBI:57856"/>
        <dbReference type="ChEBI" id="CHEBI:59789"/>
        <dbReference type="ChEBI" id="CHEBI:74483"/>
        <dbReference type="ChEBI" id="CHEBI:82748"/>
        <dbReference type="EC" id="2.1.1.191"/>
    </reaction>
</comment>
<comment type="subcellular location">
    <subcellularLocation>
        <location evidence="1">Cytoplasm</location>
    </subcellularLocation>
</comment>
<comment type="similarity">
    <text evidence="1">Belongs to the methyltransferase superfamily. RlmI family.</text>
</comment>
<keyword id="KW-0963">Cytoplasm</keyword>
<keyword id="KW-0489">Methyltransferase</keyword>
<keyword id="KW-1185">Reference proteome</keyword>
<keyword id="KW-0694">RNA-binding</keyword>
<keyword id="KW-0698">rRNA processing</keyword>
<keyword id="KW-0949">S-adenosyl-L-methionine</keyword>
<keyword id="KW-0808">Transferase</keyword>
<dbReference type="EC" id="2.1.1.191" evidence="1"/>
<dbReference type="EMBL" id="CP001616">
    <property type="protein sequence ID" value="ACQ93603.1"/>
    <property type="molecule type" value="Genomic_DNA"/>
</dbReference>
<dbReference type="RefSeq" id="WP_015879071.1">
    <property type="nucleotide sequence ID" value="NC_012691.1"/>
</dbReference>
<dbReference type="SMR" id="C4L7I7"/>
<dbReference type="STRING" id="595494.Tola_2004"/>
<dbReference type="KEGG" id="tau:Tola_2004"/>
<dbReference type="eggNOG" id="COG1092">
    <property type="taxonomic scope" value="Bacteria"/>
</dbReference>
<dbReference type="HOGENOM" id="CLU_014042_0_0_6"/>
<dbReference type="OrthoDB" id="9805492at2"/>
<dbReference type="Proteomes" id="UP000009073">
    <property type="component" value="Chromosome"/>
</dbReference>
<dbReference type="GO" id="GO:0005737">
    <property type="term" value="C:cytoplasm"/>
    <property type="evidence" value="ECO:0007669"/>
    <property type="project" value="UniProtKB-SubCell"/>
</dbReference>
<dbReference type="GO" id="GO:0003723">
    <property type="term" value="F:RNA binding"/>
    <property type="evidence" value="ECO:0007669"/>
    <property type="project" value="UniProtKB-KW"/>
</dbReference>
<dbReference type="GO" id="GO:0016434">
    <property type="term" value="F:rRNA (cytosine) methyltransferase activity"/>
    <property type="evidence" value="ECO:0007669"/>
    <property type="project" value="UniProtKB-UniRule"/>
</dbReference>
<dbReference type="CDD" id="cd02440">
    <property type="entry name" value="AdoMet_MTases"/>
    <property type="match status" value="1"/>
</dbReference>
<dbReference type="CDD" id="cd21153">
    <property type="entry name" value="PUA_RlmI"/>
    <property type="match status" value="1"/>
</dbReference>
<dbReference type="CDD" id="cd11572">
    <property type="entry name" value="RlmI_M_like"/>
    <property type="match status" value="1"/>
</dbReference>
<dbReference type="Gene3D" id="2.30.130.10">
    <property type="entry name" value="PUA domain"/>
    <property type="match status" value="1"/>
</dbReference>
<dbReference type="Gene3D" id="3.30.750.80">
    <property type="entry name" value="RNA methyltransferase domain (HRMD) like"/>
    <property type="match status" value="1"/>
</dbReference>
<dbReference type="Gene3D" id="3.40.50.150">
    <property type="entry name" value="Vaccinia Virus protein VP39"/>
    <property type="match status" value="1"/>
</dbReference>
<dbReference type="HAMAP" id="MF_01857">
    <property type="entry name" value="23SrRNA_methyltr_I"/>
    <property type="match status" value="1"/>
</dbReference>
<dbReference type="InterPro" id="IPR002478">
    <property type="entry name" value="PUA"/>
</dbReference>
<dbReference type="InterPro" id="IPR015947">
    <property type="entry name" value="PUA-like_sf"/>
</dbReference>
<dbReference type="InterPro" id="IPR036974">
    <property type="entry name" value="PUA_sf"/>
</dbReference>
<dbReference type="InterPro" id="IPR023542">
    <property type="entry name" value="RLMI"/>
</dbReference>
<dbReference type="InterPro" id="IPR041532">
    <property type="entry name" value="RlmI-like_PUA"/>
</dbReference>
<dbReference type="InterPro" id="IPR019614">
    <property type="entry name" value="SAM-dep_methyl-trfase"/>
</dbReference>
<dbReference type="InterPro" id="IPR029063">
    <property type="entry name" value="SAM-dependent_MTases_sf"/>
</dbReference>
<dbReference type="PANTHER" id="PTHR42873">
    <property type="entry name" value="RIBOSOMAL RNA LARGE SUBUNIT METHYLTRANSFERASE"/>
    <property type="match status" value="1"/>
</dbReference>
<dbReference type="PANTHER" id="PTHR42873:SF1">
    <property type="entry name" value="S-ADENOSYLMETHIONINE-DEPENDENT METHYLTRANSFERASE DOMAIN-CONTAINING PROTEIN"/>
    <property type="match status" value="1"/>
</dbReference>
<dbReference type="Pfam" id="PF10672">
    <property type="entry name" value="Methyltrans_SAM"/>
    <property type="match status" value="1"/>
</dbReference>
<dbReference type="Pfam" id="PF17785">
    <property type="entry name" value="PUA_3"/>
    <property type="match status" value="1"/>
</dbReference>
<dbReference type="SMART" id="SM00359">
    <property type="entry name" value="PUA"/>
    <property type="match status" value="1"/>
</dbReference>
<dbReference type="SUPFAM" id="SSF88697">
    <property type="entry name" value="PUA domain-like"/>
    <property type="match status" value="1"/>
</dbReference>
<dbReference type="SUPFAM" id="SSF53335">
    <property type="entry name" value="S-adenosyl-L-methionine-dependent methyltransferases"/>
    <property type="match status" value="1"/>
</dbReference>
<dbReference type="PROSITE" id="PS50890">
    <property type="entry name" value="PUA"/>
    <property type="match status" value="1"/>
</dbReference>
<evidence type="ECO:0000255" key="1">
    <source>
        <dbReference type="HAMAP-Rule" id="MF_01857"/>
    </source>
</evidence>
<proteinExistence type="inferred from homology"/>
<organism>
    <name type="scientific">Tolumonas auensis (strain DSM 9187 / NBRC 110442 / TA 4)</name>
    <dbReference type="NCBI Taxonomy" id="595494"/>
    <lineage>
        <taxon>Bacteria</taxon>
        <taxon>Pseudomonadati</taxon>
        <taxon>Pseudomonadota</taxon>
        <taxon>Gammaproteobacteria</taxon>
        <taxon>Aeromonadales</taxon>
        <taxon>Aeromonadaceae</taxon>
        <taxon>Tolumonas</taxon>
    </lineage>
</organism>
<gene>
    <name evidence="1" type="primary">rlmI</name>
    <name type="ordered locus">Tola_2004</name>
</gene>
<feature type="chain" id="PRO_1000216155" description="Ribosomal RNA large subunit methyltransferase I">
    <location>
        <begin position="1"/>
        <end position="397"/>
    </location>
</feature>
<feature type="domain" description="PUA" evidence="1">
    <location>
        <begin position="2"/>
        <end position="81"/>
    </location>
</feature>
<accession>C4L7I7</accession>
<name>RLMI_TOLAT</name>
<reference key="1">
    <citation type="submission" date="2009-05" db="EMBL/GenBank/DDBJ databases">
        <title>Complete sequence of Tolumonas auensis DSM 9187.</title>
        <authorList>
            <consortium name="US DOE Joint Genome Institute"/>
            <person name="Lucas S."/>
            <person name="Copeland A."/>
            <person name="Lapidus A."/>
            <person name="Glavina del Rio T."/>
            <person name="Tice H."/>
            <person name="Bruce D."/>
            <person name="Goodwin L."/>
            <person name="Pitluck S."/>
            <person name="Chertkov O."/>
            <person name="Brettin T."/>
            <person name="Detter J.C."/>
            <person name="Han C."/>
            <person name="Larimer F."/>
            <person name="Land M."/>
            <person name="Hauser L."/>
            <person name="Kyrpides N."/>
            <person name="Mikhailova N."/>
            <person name="Spring S."/>
            <person name="Beller H."/>
        </authorList>
    </citation>
    <scope>NUCLEOTIDE SEQUENCE [LARGE SCALE GENOMIC DNA]</scope>
    <source>
        <strain>DSM 9187 / NBRC 110442 / TA 4</strain>
    </source>
</reference>
<sequence length="397" mass="44925">MSTTVYLQKDREKSLLRRHPWIFSKAIDKVKGKPEAGEPVDIVDQRGKWLARGAWSPDSQIRLRVWTFKQDEQIDTEFFVRRLQQAQAGRELLISRLQLSAYRLVAAESDLLPGITIDRYNDHLVCQLLSSGAEYHRHELISALQQLYPTCSIYERSDVAVRKKEGLAERTGLIYGEVPPDEVIIEENNGIKISVDIKGGHKTGFYLDQRDNRAIAGRYAKDRRVLNCFCYTGGFGVYALQGGAKEVINVDVSESALELAKHNATLNKLDLTKARFEKQDVFKLLREYRERGEKFDMIVLDPPKFAENKAQLIGACRGYKDINLLAFQLLNPEGILLTFSCSGLMTSELFQKIVADAALDAGREAQILERMTQAADHPIATPYPEGYYLKGLVVRAI</sequence>